<keyword id="KW-0997">Cell inner membrane</keyword>
<keyword id="KW-1003">Cell membrane</keyword>
<keyword id="KW-0472">Membrane</keyword>
<keyword id="KW-0653">Protein transport</keyword>
<keyword id="KW-1185">Reference proteome</keyword>
<keyword id="KW-0811">Translocation</keyword>
<keyword id="KW-0812">Transmembrane</keyword>
<keyword id="KW-1133">Transmembrane helix</keyword>
<keyword id="KW-0813">Transport</keyword>
<dbReference type="EMBL" id="CP001043">
    <property type="protein sequence ID" value="ACC71920.1"/>
    <property type="molecule type" value="Genomic_DNA"/>
</dbReference>
<dbReference type="RefSeq" id="WP_012402118.1">
    <property type="nucleotide sequence ID" value="NC_010622.1"/>
</dbReference>
<dbReference type="SMR" id="B2JHX4"/>
<dbReference type="STRING" id="391038.Bphy_2748"/>
<dbReference type="KEGG" id="bph:Bphy_2748"/>
<dbReference type="eggNOG" id="COG1826">
    <property type="taxonomic scope" value="Bacteria"/>
</dbReference>
<dbReference type="HOGENOM" id="CLU_086034_5_3_4"/>
<dbReference type="OrthoDB" id="7066617at2"/>
<dbReference type="Proteomes" id="UP000001192">
    <property type="component" value="Chromosome 1"/>
</dbReference>
<dbReference type="GO" id="GO:0033281">
    <property type="term" value="C:TAT protein transport complex"/>
    <property type="evidence" value="ECO:0007669"/>
    <property type="project" value="UniProtKB-UniRule"/>
</dbReference>
<dbReference type="GO" id="GO:0008320">
    <property type="term" value="F:protein transmembrane transporter activity"/>
    <property type="evidence" value="ECO:0007669"/>
    <property type="project" value="UniProtKB-UniRule"/>
</dbReference>
<dbReference type="GO" id="GO:0043953">
    <property type="term" value="P:protein transport by the Tat complex"/>
    <property type="evidence" value="ECO:0007669"/>
    <property type="project" value="UniProtKB-UniRule"/>
</dbReference>
<dbReference type="Gene3D" id="1.20.5.3310">
    <property type="match status" value="1"/>
</dbReference>
<dbReference type="HAMAP" id="MF_00236">
    <property type="entry name" value="TatA_E"/>
    <property type="match status" value="1"/>
</dbReference>
<dbReference type="InterPro" id="IPR003369">
    <property type="entry name" value="TatA/B/E"/>
</dbReference>
<dbReference type="InterPro" id="IPR006312">
    <property type="entry name" value="TatA/E"/>
</dbReference>
<dbReference type="NCBIfam" id="NF002813">
    <property type="entry name" value="PRK02958.1"/>
    <property type="match status" value="1"/>
</dbReference>
<dbReference type="NCBIfam" id="TIGR01411">
    <property type="entry name" value="tatAE"/>
    <property type="match status" value="1"/>
</dbReference>
<dbReference type="PANTHER" id="PTHR42982">
    <property type="entry name" value="SEC-INDEPENDENT PROTEIN TRANSLOCASE PROTEIN TATA"/>
    <property type="match status" value="1"/>
</dbReference>
<dbReference type="PANTHER" id="PTHR42982:SF1">
    <property type="entry name" value="SEC-INDEPENDENT PROTEIN TRANSLOCASE PROTEIN TATA"/>
    <property type="match status" value="1"/>
</dbReference>
<dbReference type="Pfam" id="PF02416">
    <property type="entry name" value="TatA_B_E"/>
    <property type="match status" value="1"/>
</dbReference>
<proteinExistence type="inferred from homology"/>
<name>TATA_PARP8</name>
<accession>B2JHX4</accession>
<reference key="1">
    <citation type="journal article" date="2014" name="Stand. Genomic Sci.">
        <title>Complete genome sequence of Burkholderia phymatum STM815(T), a broad host range and efficient nitrogen-fixing symbiont of Mimosa species.</title>
        <authorList>
            <person name="Moulin L."/>
            <person name="Klonowska A."/>
            <person name="Caroline B."/>
            <person name="Booth K."/>
            <person name="Vriezen J.A."/>
            <person name="Melkonian R."/>
            <person name="James E.K."/>
            <person name="Young J.P."/>
            <person name="Bena G."/>
            <person name="Hauser L."/>
            <person name="Land M."/>
            <person name="Kyrpides N."/>
            <person name="Bruce D."/>
            <person name="Chain P."/>
            <person name="Copeland A."/>
            <person name="Pitluck S."/>
            <person name="Woyke T."/>
            <person name="Lizotte-Waniewski M."/>
            <person name="Bristow J."/>
            <person name="Riley M."/>
        </authorList>
    </citation>
    <scope>NUCLEOTIDE SEQUENCE [LARGE SCALE GENOMIC DNA]</scope>
    <source>
        <strain>DSM 17167 / CIP 108236 / LMG 21445 / STM815</strain>
    </source>
</reference>
<evidence type="ECO:0000255" key="1">
    <source>
        <dbReference type="HAMAP-Rule" id="MF_00236"/>
    </source>
</evidence>
<evidence type="ECO:0000256" key="2">
    <source>
        <dbReference type="SAM" id="MobiDB-lite"/>
    </source>
</evidence>
<comment type="function">
    <text evidence="1">Part of the twin-arginine translocation (Tat) system that transports large folded proteins containing a characteristic twin-arginine motif in their signal peptide across membranes. TatA could form the protein-conducting channel of the Tat system.</text>
</comment>
<comment type="subunit">
    <text evidence="1">The Tat system comprises two distinct complexes: a TatABC complex, containing multiple copies of TatA, TatB and TatC subunits, and a separate TatA complex, containing only TatA subunits. Substrates initially bind to the TatABC complex, which probably triggers association of the separate TatA complex to form the active translocon.</text>
</comment>
<comment type="subcellular location">
    <subcellularLocation>
        <location evidence="1">Cell inner membrane</location>
        <topology evidence="1">Single-pass membrane protein</topology>
    </subcellularLocation>
</comment>
<comment type="similarity">
    <text evidence="1">Belongs to the TatA/E family.</text>
</comment>
<feature type="chain" id="PRO_1000197860" description="Sec-independent protein translocase protein TatA">
    <location>
        <begin position="1"/>
        <end position="78"/>
    </location>
</feature>
<feature type="transmembrane region" description="Helical" evidence="1">
    <location>
        <begin position="1"/>
        <end position="21"/>
    </location>
</feature>
<feature type="region of interest" description="Disordered" evidence="2">
    <location>
        <begin position="39"/>
        <end position="78"/>
    </location>
</feature>
<feature type="compositionally biased region" description="Basic and acidic residues" evidence="2">
    <location>
        <begin position="39"/>
        <end position="57"/>
    </location>
</feature>
<feature type="compositionally biased region" description="Basic and acidic residues" evidence="2">
    <location>
        <begin position="65"/>
        <end position="78"/>
    </location>
</feature>
<organism>
    <name type="scientific">Paraburkholderia phymatum (strain DSM 17167 / CIP 108236 / LMG 21445 / STM815)</name>
    <name type="common">Burkholderia phymatum</name>
    <dbReference type="NCBI Taxonomy" id="391038"/>
    <lineage>
        <taxon>Bacteria</taxon>
        <taxon>Pseudomonadati</taxon>
        <taxon>Pseudomonadota</taxon>
        <taxon>Betaproteobacteria</taxon>
        <taxon>Burkholderiales</taxon>
        <taxon>Burkholderiaceae</taxon>
        <taxon>Paraburkholderia</taxon>
    </lineage>
</organism>
<gene>
    <name evidence="1" type="primary">tatA</name>
    <name type="ordered locus">Bphy_2748</name>
</gene>
<protein>
    <recommendedName>
        <fullName evidence="1">Sec-independent protein translocase protein TatA</fullName>
    </recommendedName>
</protein>
<sequence>MGSLSIWHWLIVLLIVALVFGTKKLRNIGSDLGGAVKGFKEGMKDGETPEGQQRDQLSRTNTVDVDAKEKAPHSGDSR</sequence>